<evidence type="ECO:0000255" key="1">
    <source>
        <dbReference type="HAMAP-Rule" id="MF_00564"/>
    </source>
</evidence>
<proteinExistence type="inferred from homology"/>
<sequence length="248" mass="26852">MRVDGREKNALRKIEVTPDYLMHPEGSVLIASGNTKVICSASVETKVPPFMRGEGRGWISAEYSMLPRATNTRNIRESSKGKVTGRTMEIQRLIGRALRAVVDLDALGERTIWLDCDVIQADGGTRTASITGAFIAMVMAIAKLDEQVPFTKFPVKDFLAATSVGVLEEGGTVLDLNYIEDSAAQVDMNIIMTGSGAFVELQGTGEEATFSETELAELIALGKKGISELIEIQKEILGDKITARIKGE</sequence>
<name>RNPH_LISW6</name>
<organism>
    <name type="scientific">Listeria welshimeri serovar 6b (strain ATCC 35897 / DSM 20650 / CCUG 15529 / CIP 8149 / NCTC 11857 / SLCC 5334 / V8)</name>
    <dbReference type="NCBI Taxonomy" id="386043"/>
    <lineage>
        <taxon>Bacteria</taxon>
        <taxon>Bacillati</taxon>
        <taxon>Bacillota</taxon>
        <taxon>Bacilli</taxon>
        <taxon>Bacillales</taxon>
        <taxon>Listeriaceae</taxon>
        <taxon>Listeria</taxon>
    </lineage>
</organism>
<comment type="function">
    <text evidence="1">Phosphorolytic 3'-5' exoribonuclease that plays an important role in tRNA 3'-end maturation. Removes nucleotide residues following the 3'-CCA terminus of tRNAs; can also add nucleotides to the ends of RNA molecules by using nucleoside diphosphates as substrates, but this may not be physiologically important. Probably plays a role in initiation of 16S rRNA degradation (leading to ribosome degradation) during starvation.</text>
</comment>
<comment type="catalytic activity">
    <reaction evidence="1">
        <text>tRNA(n+1) + phosphate = tRNA(n) + a ribonucleoside 5'-diphosphate</text>
        <dbReference type="Rhea" id="RHEA:10628"/>
        <dbReference type="Rhea" id="RHEA-COMP:17343"/>
        <dbReference type="Rhea" id="RHEA-COMP:17344"/>
        <dbReference type="ChEBI" id="CHEBI:43474"/>
        <dbReference type="ChEBI" id="CHEBI:57930"/>
        <dbReference type="ChEBI" id="CHEBI:173114"/>
        <dbReference type="EC" id="2.7.7.56"/>
    </reaction>
</comment>
<comment type="subunit">
    <text evidence="1">Homohexameric ring arranged as a trimer of dimers.</text>
</comment>
<comment type="similarity">
    <text evidence="1">Belongs to the RNase PH family.</text>
</comment>
<accession>A0AHX9</accession>
<gene>
    <name evidence="1" type="primary">rph</name>
    <name type="ordered locus">lwe1193</name>
</gene>
<dbReference type="EC" id="2.7.7.56" evidence="1"/>
<dbReference type="EMBL" id="AM263198">
    <property type="protein sequence ID" value="CAK20611.1"/>
    <property type="molecule type" value="Genomic_DNA"/>
</dbReference>
<dbReference type="RefSeq" id="WP_011702007.1">
    <property type="nucleotide sequence ID" value="NC_008555.1"/>
</dbReference>
<dbReference type="SMR" id="A0AHX9"/>
<dbReference type="STRING" id="386043.lwe1193"/>
<dbReference type="GeneID" id="61189076"/>
<dbReference type="KEGG" id="lwe:lwe1193"/>
<dbReference type="eggNOG" id="COG0689">
    <property type="taxonomic scope" value="Bacteria"/>
</dbReference>
<dbReference type="HOGENOM" id="CLU_050858_0_0_9"/>
<dbReference type="OrthoDB" id="9802265at2"/>
<dbReference type="Proteomes" id="UP000000779">
    <property type="component" value="Chromosome"/>
</dbReference>
<dbReference type="GO" id="GO:0000175">
    <property type="term" value="F:3'-5'-RNA exonuclease activity"/>
    <property type="evidence" value="ECO:0007669"/>
    <property type="project" value="UniProtKB-UniRule"/>
</dbReference>
<dbReference type="GO" id="GO:0000049">
    <property type="term" value="F:tRNA binding"/>
    <property type="evidence" value="ECO:0007669"/>
    <property type="project" value="UniProtKB-UniRule"/>
</dbReference>
<dbReference type="GO" id="GO:0009022">
    <property type="term" value="F:tRNA nucleotidyltransferase activity"/>
    <property type="evidence" value="ECO:0007669"/>
    <property type="project" value="UniProtKB-UniRule"/>
</dbReference>
<dbReference type="GO" id="GO:0016075">
    <property type="term" value="P:rRNA catabolic process"/>
    <property type="evidence" value="ECO:0007669"/>
    <property type="project" value="UniProtKB-UniRule"/>
</dbReference>
<dbReference type="GO" id="GO:0006364">
    <property type="term" value="P:rRNA processing"/>
    <property type="evidence" value="ECO:0007669"/>
    <property type="project" value="UniProtKB-KW"/>
</dbReference>
<dbReference type="GO" id="GO:0008033">
    <property type="term" value="P:tRNA processing"/>
    <property type="evidence" value="ECO:0007669"/>
    <property type="project" value="UniProtKB-UniRule"/>
</dbReference>
<dbReference type="CDD" id="cd11362">
    <property type="entry name" value="RNase_PH_bact"/>
    <property type="match status" value="1"/>
</dbReference>
<dbReference type="FunFam" id="3.30.230.70:FF:000003">
    <property type="entry name" value="Ribonuclease PH"/>
    <property type="match status" value="1"/>
</dbReference>
<dbReference type="Gene3D" id="3.30.230.70">
    <property type="entry name" value="GHMP Kinase, N-terminal domain"/>
    <property type="match status" value="1"/>
</dbReference>
<dbReference type="HAMAP" id="MF_00564">
    <property type="entry name" value="RNase_PH"/>
    <property type="match status" value="1"/>
</dbReference>
<dbReference type="InterPro" id="IPR001247">
    <property type="entry name" value="ExoRNase_PH_dom1"/>
</dbReference>
<dbReference type="InterPro" id="IPR015847">
    <property type="entry name" value="ExoRNase_PH_dom2"/>
</dbReference>
<dbReference type="InterPro" id="IPR036345">
    <property type="entry name" value="ExoRNase_PH_dom2_sf"/>
</dbReference>
<dbReference type="InterPro" id="IPR027408">
    <property type="entry name" value="PNPase/RNase_PH_dom_sf"/>
</dbReference>
<dbReference type="InterPro" id="IPR020568">
    <property type="entry name" value="Ribosomal_Su5_D2-typ_SF"/>
</dbReference>
<dbReference type="InterPro" id="IPR050080">
    <property type="entry name" value="RNase_PH"/>
</dbReference>
<dbReference type="InterPro" id="IPR002381">
    <property type="entry name" value="RNase_PH_bac-type"/>
</dbReference>
<dbReference type="InterPro" id="IPR018336">
    <property type="entry name" value="RNase_PH_CS"/>
</dbReference>
<dbReference type="NCBIfam" id="TIGR01966">
    <property type="entry name" value="RNasePH"/>
    <property type="match status" value="1"/>
</dbReference>
<dbReference type="PANTHER" id="PTHR11953">
    <property type="entry name" value="EXOSOME COMPLEX COMPONENT"/>
    <property type="match status" value="1"/>
</dbReference>
<dbReference type="PANTHER" id="PTHR11953:SF0">
    <property type="entry name" value="EXOSOME COMPLEX COMPONENT RRP41"/>
    <property type="match status" value="1"/>
</dbReference>
<dbReference type="Pfam" id="PF01138">
    <property type="entry name" value="RNase_PH"/>
    <property type="match status" value="1"/>
</dbReference>
<dbReference type="Pfam" id="PF03725">
    <property type="entry name" value="RNase_PH_C"/>
    <property type="match status" value="1"/>
</dbReference>
<dbReference type="SUPFAM" id="SSF55666">
    <property type="entry name" value="Ribonuclease PH domain 2-like"/>
    <property type="match status" value="1"/>
</dbReference>
<dbReference type="SUPFAM" id="SSF54211">
    <property type="entry name" value="Ribosomal protein S5 domain 2-like"/>
    <property type="match status" value="1"/>
</dbReference>
<dbReference type="PROSITE" id="PS01277">
    <property type="entry name" value="RIBONUCLEASE_PH"/>
    <property type="match status" value="1"/>
</dbReference>
<protein>
    <recommendedName>
        <fullName evidence="1">Ribonuclease PH</fullName>
        <shortName evidence="1">RNase PH</shortName>
        <ecNumber evidence="1">2.7.7.56</ecNumber>
    </recommendedName>
    <alternativeName>
        <fullName evidence="1">tRNA nucleotidyltransferase</fullName>
    </alternativeName>
</protein>
<reference key="1">
    <citation type="journal article" date="2006" name="J. Bacteriol.">
        <title>Whole-genome sequence of Listeria welshimeri reveals common steps in genome reduction with Listeria innocua as compared to Listeria monocytogenes.</title>
        <authorList>
            <person name="Hain T."/>
            <person name="Steinweg C."/>
            <person name="Kuenne C.T."/>
            <person name="Billion A."/>
            <person name="Ghai R."/>
            <person name="Chatterjee S.S."/>
            <person name="Domann E."/>
            <person name="Kaerst U."/>
            <person name="Goesmann A."/>
            <person name="Bekel T."/>
            <person name="Bartels D."/>
            <person name="Kaiser O."/>
            <person name="Meyer F."/>
            <person name="Puehler A."/>
            <person name="Weisshaar B."/>
            <person name="Wehland J."/>
            <person name="Liang C."/>
            <person name="Dandekar T."/>
            <person name="Lampidis R."/>
            <person name="Kreft J."/>
            <person name="Goebel W."/>
            <person name="Chakraborty T."/>
        </authorList>
    </citation>
    <scope>NUCLEOTIDE SEQUENCE [LARGE SCALE GENOMIC DNA]</scope>
    <source>
        <strain>ATCC 35897 / DSM 20650 / CCUG 15529 / CIP 8149 / NCTC 11857 / SLCC 5334 / V8</strain>
    </source>
</reference>
<feature type="chain" id="PRO_1000024822" description="Ribonuclease PH">
    <location>
        <begin position="1"/>
        <end position="248"/>
    </location>
</feature>
<feature type="binding site" evidence="1">
    <location>
        <position position="86"/>
    </location>
    <ligand>
        <name>phosphate</name>
        <dbReference type="ChEBI" id="CHEBI:43474"/>
        <note>substrate</note>
    </ligand>
</feature>
<feature type="binding site" evidence="1">
    <location>
        <begin position="124"/>
        <end position="126"/>
    </location>
    <ligand>
        <name>phosphate</name>
        <dbReference type="ChEBI" id="CHEBI:43474"/>
        <note>substrate</note>
    </ligand>
</feature>
<keyword id="KW-0548">Nucleotidyltransferase</keyword>
<keyword id="KW-0694">RNA-binding</keyword>
<keyword id="KW-0698">rRNA processing</keyword>
<keyword id="KW-0808">Transferase</keyword>
<keyword id="KW-0819">tRNA processing</keyword>
<keyword id="KW-0820">tRNA-binding</keyword>